<keyword id="KW-0028">Amino-acid biosynthesis</keyword>
<keyword id="KW-0057">Aromatic amino acid biosynthesis</keyword>
<keyword id="KW-0413">Isomerase</keyword>
<keyword id="KW-0822">Tryptophan biosynthesis</keyword>
<reference key="1">
    <citation type="journal article" date="2003" name="Yeast">
        <title>Cloning and sequence analysis of the TRP1 gene encoding the phosphoribosyl anthranilate isomerase from Pichia anomala (strain K).</title>
        <authorList>
            <person name="Friel D."/>
            <person name="Vandenbol M."/>
            <person name="Jijakli M.H."/>
        </authorList>
    </citation>
    <scope>NUCLEOTIDE SEQUENCE [GENOMIC DNA]</scope>
    <source>
        <strain>K</strain>
    </source>
</reference>
<organism>
    <name type="scientific">Wickerhamomyces anomalus</name>
    <name type="common">Yeast</name>
    <name type="synonym">Hansenula anomala</name>
    <dbReference type="NCBI Taxonomy" id="4927"/>
    <lineage>
        <taxon>Eukaryota</taxon>
        <taxon>Fungi</taxon>
        <taxon>Dikarya</taxon>
        <taxon>Ascomycota</taxon>
        <taxon>Saccharomycotina</taxon>
        <taxon>Saccharomycetes</taxon>
        <taxon>Phaffomycetales</taxon>
        <taxon>Wickerhamomycetaceae</taxon>
        <taxon>Wickerhamomyces</taxon>
    </lineage>
</organism>
<name>TRPF_WICAO</name>
<gene>
    <name type="primary">TRP1</name>
</gene>
<evidence type="ECO:0000305" key="1"/>
<protein>
    <recommendedName>
        <fullName>N-(5'-phosphoribosyl)anthranilate isomerase</fullName>
        <shortName>PRAI</shortName>
        <ecNumber>5.3.1.24</ecNumber>
    </recommendedName>
</protein>
<accession>Q875I3</accession>
<sequence>MLVKICGVKDVEAAQVALESGADMIGMIFVPGKPRTIQVSNAKEVVSLVESKRKGLNSNELYDSLKPGQDSLWFEQVHDSIKSNGPYSVGVFRNQSIEEINNIIEEVDIDFVQLHGQESHDEYIPQLKKPVITRFVPNETKVLQSLKPNKHLLPLFDSEAGGEGVKLNWSNLSDWSAKNNARYLLAGGLTPDNVHEAIKLDGVIGVDVSGGVETNGVKDYVKIKEFVKNALQ</sequence>
<comment type="catalytic activity">
    <reaction>
        <text>N-(5-phospho-beta-D-ribosyl)anthranilate = 1-(2-carboxyphenylamino)-1-deoxy-D-ribulose 5-phosphate</text>
        <dbReference type="Rhea" id="RHEA:21540"/>
        <dbReference type="ChEBI" id="CHEBI:18277"/>
        <dbReference type="ChEBI" id="CHEBI:58613"/>
        <dbReference type="EC" id="5.3.1.24"/>
    </reaction>
</comment>
<comment type="pathway">
    <text>Amino-acid biosynthesis; L-tryptophan biosynthesis; L-tryptophan from chorismate: step 3/5.</text>
</comment>
<comment type="similarity">
    <text evidence="1">Belongs to the TrpF family.</text>
</comment>
<dbReference type="EC" id="5.3.1.24"/>
<dbReference type="EMBL" id="AY198188">
    <property type="protein sequence ID" value="AAO19636.1"/>
    <property type="molecule type" value="Genomic_DNA"/>
</dbReference>
<dbReference type="SMR" id="Q875I3"/>
<dbReference type="UniPathway" id="UPA00035">
    <property type="reaction ID" value="UER00042"/>
</dbReference>
<dbReference type="GO" id="GO:0004640">
    <property type="term" value="F:phosphoribosylanthranilate isomerase activity"/>
    <property type="evidence" value="ECO:0007669"/>
    <property type="project" value="UniProtKB-EC"/>
</dbReference>
<dbReference type="GO" id="GO:0000162">
    <property type="term" value="P:L-tryptophan biosynthetic process"/>
    <property type="evidence" value="ECO:0007669"/>
    <property type="project" value="UniProtKB-UniPathway"/>
</dbReference>
<dbReference type="CDD" id="cd00405">
    <property type="entry name" value="PRAI"/>
    <property type="match status" value="1"/>
</dbReference>
<dbReference type="Gene3D" id="3.20.20.70">
    <property type="entry name" value="Aldolase class I"/>
    <property type="match status" value="1"/>
</dbReference>
<dbReference type="HAMAP" id="MF_00135">
    <property type="entry name" value="PRAI"/>
    <property type="match status" value="1"/>
</dbReference>
<dbReference type="InterPro" id="IPR013785">
    <property type="entry name" value="Aldolase_TIM"/>
</dbReference>
<dbReference type="InterPro" id="IPR001240">
    <property type="entry name" value="PRAI_dom"/>
</dbReference>
<dbReference type="InterPro" id="IPR011060">
    <property type="entry name" value="RibuloseP-bd_barrel"/>
</dbReference>
<dbReference type="InterPro" id="IPR044643">
    <property type="entry name" value="TrpF_fam"/>
</dbReference>
<dbReference type="PANTHER" id="PTHR42894">
    <property type="entry name" value="N-(5'-PHOSPHORIBOSYL)ANTHRANILATE ISOMERASE"/>
    <property type="match status" value="1"/>
</dbReference>
<dbReference type="PANTHER" id="PTHR42894:SF1">
    <property type="entry name" value="N-(5'-PHOSPHORIBOSYL)ANTHRANILATE ISOMERASE"/>
    <property type="match status" value="1"/>
</dbReference>
<dbReference type="Pfam" id="PF00697">
    <property type="entry name" value="PRAI"/>
    <property type="match status" value="1"/>
</dbReference>
<dbReference type="SUPFAM" id="SSF51366">
    <property type="entry name" value="Ribulose-phoshate binding barrel"/>
    <property type="match status" value="1"/>
</dbReference>
<feature type="chain" id="PRO_0000154332" description="N-(5'-phosphoribosyl)anthranilate isomerase">
    <location>
        <begin position="1"/>
        <end position="232"/>
    </location>
</feature>
<proteinExistence type="inferred from homology"/>